<keyword id="KW-0963">Cytoplasm</keyword>
<keyword id="KW-0227">DNA damage</keyword>
<keyword id="KW-0234">DNA repair</keyword>
<keyword id="KW-0235">DNA replication</keyword>
<keyword id="KW-0239">DNA-directed DNA polymerase</keyword>
<keyword id="KW-0548">Nucleotidyltransferase</keyword>
<keyword id="KW-1185">Reference proteome</keyword>
<keyword id="KW-0808">Transferase</keyword>
<accession>Q67N73</accession>
<protein>
    <recommendedName>
        <fullName evidence="1">Error-prone DNA polymerase</fullName>
        <ecNumber evidence="1">2.7.7.7</ecNumber>
    </recommendedName>
</protein>
<gene>
    <name evidence="1" type="primary">dnaE2</name>
    <name type="ordered locus">STH1885</name>
</gene>
<dbReference type="EC" id="2.7.7.7" evidence="1"/>
<dbReference type="EMBL" id="AP006840">
    <property type="protein sequence ID" value="BAD40870.1"/>
    <property type="molecule type" value="Genomic_DNA"/>
</dbReference>
<dbReference type="RefSeq" id="WP_011196012.1">
    <property type="nucleotide sequence ID" value="NC_006177.1"/>
</dbReference>
<dbReference type="SMR" id="Q67N73"/>
<dbReference type="STRING" id="292459.STH1885"/>
<dbReference type="KEGG" id="sth:STH1885"/>
<dbReference type="eggNOG" id="COG0587">
    <property type="taxonomic scope" value="Bacteria"/>
</dbReference>
<dbReference type="HOGENOM" id="CLU_001600_0_0_9"/>
<dbReference type="OrthoDB" id="9804290at2"/>
<dbReference type="Proteomes" id="UP000000417">
    <property type="component" value="Chromosome"/>
</dbReference>
<dbReference type="GO" id="GO:0005737">
    <property type="term" value="C:cytoplasm"/>
    <property type="evidence" value="ECO:0007669"/>
    <property type="project" value="UniProtKB-SubCell"/>
</dbReference>
<dbReference type="GO" id="GO:0008408">
    <property type="term" value="F:3'-5' exonuclease activity"/>
    <property type="evidence" value="ECO:0007669"/>
    <property type="project" value="InterPro"/>
</dbReference>
<dbReference type="GO" id="GO:0003887">
    <property type="term" value="F:DNA-directed DNA polymerase activity"/>
    <property type="evidence" value="ECO:0007669"/>
    <property type="project" value="UniProtKB-KW"/>
</dbReference>
<dbReference type="GO" id="GO:0006281">
    <property type="term" value="P:DNA repair"/>
    <property type="evidence" value="ECO:0007669"/>
    <property type="project" value="UniProtKB-KW"/>
</dbReference>
<dbReference type="GO" id="GO:0006260">
    <property type="term" value="P:DNA replication"/>
    <property type="evidence" value="ECO:0007669"/>
    <property type="project" value="UniProtKB-KW"/>
</dbReference>
<dbReference type="CDD" id="cd04485">
    <property type="entry name" value="DnaE_OBF"/>
    <property type="match status" value="1"/>
</dbReference>
<dbReference type="Gene3D" id="1.10.150.870">
    <property type="match status" value="1"/>
</dbReference>
<dbReference type="Gene3D" id="1.10.10.1600">
    <property type="entry name" value="Bacterial DNA polymerase III alpha subunit, thumb domain"/>
    <property type="match status" value="1"/>
</dbReference>
<dbReference type="Gene3D" id="3.20.20.140">
    <property type="entry name" value="Metal-dependent hydrolases"/>
    <property type="match status" value="1"/>
</dbReference>
<dbReference type="HAMAP" id="MF_01902">
    <property type="entry name" value="DNApol_error_prone"/>
    <property type="match status" value="1"/>
</dbReference>
<dbReference type="InterPro" id="IPR011708">
    <property type="entry name" value="DNA_pol3_alpha_NTPase_dom"/>
</dbReference>
<dbReference type="InterPro" id="IPR041931">
    <property type="entry name" value="DNA_pol3_alpha_thumb_dom"/>
</dbReference>
<dbReference type="InterPro" id="IPR040982">
    <property type="entry name" value="DNA_pol3_finger"/>
</dbReference>
<dbReference type="InterPro" id="IPR023073">
    <property type="entry name" value="DnaE2"/>
</dbReference>
<dbReference type="InterPro" id="IPR004805">
    <property type="entry name" value="DnaE2/DnaE/PolC"/>
</dbReference>
<dbReference type="InterPro" id="IPR029460">
    <property type="entry name" value="DNAPol_HHH"/>
</dbReference>
<dbReference type="InterPro" id="IPR004013">
    <property type="entry name" value="PHP_dom"/>
</dbReference>
<dbReference type="InterPro" id="IPR003141">
    <property type="entry name" value="Pol/His_phosphatase_N"/>
</dbReference>
<dbReference type="InterPro" id="IPR016195">
    <property type="entry name" value="Pol/histidinol_Pase-like"/>
</dbReference>
<dbReference type="NCBIfam" id="TIGR00594">
    <property type="entry name" value="polc"/>
    <property type="match status" value="1"/>
</dbReference>
<dbReference type="PANTHER" id="PTHR32294">
    <property type="entry name" value="DNA POLYMERASE III SUBUNIT ALPHA"/>
    <property type="match status" value="1"/>
</dbReference>
<dbReference type="PANTHER" id="PTHR32294:SF4">
    <property type="entry name" value="ERROR-PRONE DNA POLYMERASE"/>
    <property type="match status" value="1"/>
</dbReference>
<dbReference type="Pfam" id="PF07733">
    <property type="entry name" value="DNA_pol3_alpha"/>
    <property type="match status" value="1"/>
</dbReference>
<dbReference type="Pfam" id="PF17657">
    <property type="entry name" value="DNA_pol3_finger"/>
    <property type="match status" value="1"/>
</dbReference>
<dbReference type="Pfam" id="PF14579">
    <property type="entry name" value="HHH_6"/>
    <property type="match status" value="1"/>
</dbReference>
<dbReference type="Pfam" id="PF02811">
    <property type="entry name" value="PHP"/>
    <property type="match status" value="1"/>
</dbReference>
<dbReference type="SMART" id="SM00481">
    <property type="entry name" value="POLIIIAc"/>
    <property type="match status" value="1"/>
</dbReference>
<dbReference type="SUPFAM" id="SSF89550">
    <property type="entry name" value="PHP domain-like"/>
    <property type="match status" value="1"/>
</dbReference>
<name>DNAE2_SYMTH</name>
<sequence length="1085" mass="120631">MSFVHLHVHSPFSFLDGASRLDDLIAEAALHGMPALALTDHNNVSGAVRFQRKAQEAGIQPIQGAELTLEGGYHLTLLATGPKGYANLNRLITAAHLGQEPRATPGAMFALAPGHDRLQPACPLSALSHDTDGLIALSGCRRGEIPSLILRGRLAEAEAAARRYAAWFPGRFYLELHDERLPGEQALNRALRDLGEALGLPLVVTSNVHHRTREEFFVHDLLTCVRTLTRIDQPHPERPLNDQRYLKPPEVMIERFREFPEAVKNTLAIAERCRPVLDLDARLHPEFQTPDGSHPAAYLTHLVYDGAARRYGRITERIRRRLEHELTIITRLGYEDYFLLVWDVVRFARERGIRCAGRGSAADSAVAYCLFITDVDAIERGLLFERFMSLERAQKPDIDIDFDARRRDEVAAYVYRKYGADHVASVCTYNTFQARSAVRDLGKAMGFQEADLDYLAKRIPWHAGADEILTVMARYPELRQSGIPWHKFEQLVQAAERVARFPRFIGTHLGGLVISRRPLLEVTPLQMAAKGQVVCQFDKEYVEDLGLVKLDLLSLRTFTAVDDAVRAIGDIDYEQIPHGDAATYEMLGVGESIGVFQLESPAQRALQARLKPDRFEDIVASVAIIRPGPIKGNMVEPFLARRHGKEEVTYLHPKLKPILEKTYGVVLFQEQVIEIATAVAGFTPGEADQLRRVMTHARNREDMEAIGRLFRQKAAAAGVDPAVADTIFSYIQGYASYGFCEAHAAAFANTAYKTAYLVRHYPAEYFAALMSAQPMGYYPINTLAVEARRRGVGLLPVDINRSEEAFTVEEWSREAWEAFWGMEPFAPEYPATGKAIRIGLRAVKGVGEPAAAAILAARDGGEFRSLADLVRRTGGAVPRGPLEALVLAGAFDRLHSNRRAALWQVAHLLEAERIRQERGAGQAGLLDGDAPGLGAQAAEALEAASPQGTPAIADFGAAERYLKEYELTGLMVRTHFMRFVRERLAREGYLTAQEVRQRRAGELVKVAGLPVCPHRPPTRSGKIVVFLSLEDETGLIDLTIFEDVYQRYGHLIFTDPRPPLAALGRVDRRGGHVSITVNRLRLLDT</sequence>
<proteinExistence type="inferred from homology"/>
<evidence type="ECO:0000255" key="1">
    <source>
        <dbReference type="HAMAP-Rule" id="MF_01902"/>
    </source>
</evidence>
<feature type="chain" id="PRO_0000103400" description="Error-prone DNA polymerase">
    <location>
        <begin position="1"/>
        <end position="1085"/>
    </location>
</feature>
<comment type="function">
    <text evidence="1">DNA polymerase involved in damage-induced mutagenesis and translesion synthesis (TLS). It is not the major replicative DNA polymerase.</text>
</comment>
<comment type="catalytic activity">
    <reaction evidence="1">
        <text>DNA(n) + a 2'-deoxyribonucleoside 5'-triphosphate = DNA(n+1) + diphosphate</text>
        <dbReference type="Rhea" id="RHEA:22508"/>
        <dbReference type="Rhea" id="RHEA-COMP:17339"/>
        <dbReference type="Rhea" id="RHEA-COMP:17340"/>
        <dbReference type="ChEBI" id="CHEBI:33019"/>
        <dbReference type="ChEBI" id="CHEBI:61560"/>
        <dbReference type="ChEBI" id="CHEBI:173112"/>
        <dbReference type="EC" id="2.7.7.7"/>
    </reaction>
</comment>
<comment type="subcellular location">
    <subcellularLocation>
        <location evidence="1">Cytoplasm</location>
    </subcellularLocation>
</comment>
<comment type="similarity">
    <text evidence="1">Belongs to the DNA polymerase type-C family. DnaE2 subfamily.</text>
</comment>
<reference key="1">
    <citation type="journal article" date="2004" name="Nucleic Acids Res.">
        <title>Genome sequence of Symbiobacterium thermophilum, an uncultivable bacterium that depends on microbial commensalism.</title>
        <authorList>
            <person name="Ueda K."/>
            <person name="Yamashita A."/>
            <person name="Ishikawa J."/>
            <person name="Shimada M."/>
            <person name="Watsuji T."/>
            <person name="Morimura K."/>
            <person name="Ikeda H."/>
            <person name="Hattori M."/>
            <person name="Beppu T."/>
        </authorList>
    </citation>
    <scope>NUCLEOTIDE SEQUENCE [LARGE SCALE GENOMIC DNA]</scope>
    <source>
        <strain>DSM 24528 / JCM 14929 / IAM 14863 / T</strain>
    </source>
</reference>
<organism>
    <name type="scientific">Symbiobacterium thermophilum (strain DSM 24528 / JCM 14929 / IAM 14863 / T)</name>
    <dbReference type="NCBI Taxonomy" id="292459"/>
    <lineage>
        <taxon>Bacteria</taxon>
        <taxon>Bacillati</taxon>
        <taxon>Bacillota</taxon>
        <taxon>Clostridia</taxon>
        <taxon>Eubacteriales</taxon>
        <taxon>Symbiobacteriaceae</taxon>
        <taxon>Symbiobacterium</taxon>
    </lineage>
</organism>